<dbReference type="EMBL" id="AC005405">
    <property type="status" value="NOT_ANNOTATED_CDS"/>
    <property type="molecule type" value="Genomic_DNA"/>
</dbReference>
<dbReference type="EMBL" id="CP002688">
    <property type="protein sequence ID" value="AED93495.1"/>
    <property type="molecule type" value="Genomic_DNA"/>
</dbReference>
<dbReference type="RefSeq" id="NP_197958.1">
    <property type="nucleotide sequence ID" value="NM_122487.1"/>
</dbReference>
<dbReference type="PaxDb" id="3702-AT5G25860.1"/>
<dbReference type="ProteomicsDB" id="230833"/>
<dbReference type="EnsemblPlants" id="AT5G25860.1">
    <property type="protein sequence ID" value="AT5G25860.1"/>
    <property type="gene ID" value="AT5G25860"/>
</dbReference>
<dbReference type="GeneID" id="832655"/>
<dbReference type="Gramene" id="AT5G25860.1">
    <property type="protein sequence ID" value="AT5G25860.1"/>
    <property type="gene ID" value="AT5G25860"/>
</dbReference>
<dbReference type="KEGG" id="ath:AT5G25860"/>
<dbReference type="Araport" id="AT5G25860"/>
<dbReference type="TAIR" id="AT5G25860"/>
<dbReference type="HOGENOM" id="CLU_010721_7_1_1"/>
<dbReference type="InParanoid" id="Q3E7J7"/>
<dbReference type="OMA" id="RHECNTH"/>
<dbReference type="PhylomeDB" id="Q3E7J7"/>
<dbReference type="PRO" id="PR:Q3E7J7"/>
<dbReference type="Proteomes" id="UP000006548">
    <property type="component" value="Chromosome 5"/>
</dbReference>
<dbReference type="ExpressionAtlas" id="Q3E7J7">
    <property type="expression patterns" value="baseline and differential"/>
</dbReference>
<dbReference type="GO" id="GO:0005773">
    <property type="term" value="C:vacuole"/>
    <property type="evidence" value="ECO:0007005"/>
    <property type="project" value="TAIR"/>
</dbReference>
<dbReference type="CDD" id="cd22160">
    <property type="entry name" value="F-box_AtFBL13-like"/>
    <property type="match status" value="1"/>
</dbReference>
<dbReference type="Gene3D" id="1.20.1280.50">
    <property type="match status" value="1"/>
</dbReference>
<dbReference type="Gene3D" id="3.80.10.10">
    <property type="entry name" value="Ribonuclease Inhibitor"/>
    <property type="match status" value="1"/>
</dbReference>
<dbReference type="InterPro" id="IPR036047">
    <property type="entry name" value="F-box-like_dom_sf"/>
</dbReference>
<dbReference type="InterPro" id="IPR053781">
    <property type="entry name" value="F-box_AtFBL13-like"/>
</dbReference>
<dbReference type="InterPro" id="IPR001810">
    <property type="entry name" value="F-box_dom"/>
</dbReference>
<dbReference type="InterPro" id="IPR006566">
    <property type="entry name" value="FBD"/>
</dbReference>
<dbReference type="InterPro" id="IPR055294">
    <property type="entry name" value="FBL60-like"/>
</dbReference>
<dbReference type="InterPro" id="IPR032675">
    <property type="entry name" value="LRR_dom_sf"/>
</dbReference>
<dbReference type="InterPro" id="IPR055411">
    <property type="entry name" value="LRR_FXL15/At3g58940/PEG3-like"/>
</dbReference>
<dbReference type="PANTHER" id="PTHR31293:SF22">
    <property type="entry name" value="BNAC06G06520D PROTEIN"/>
    <property type="match status" value="1"/>
</dbReference>
<dbReference type="PANTHER" id="PTHR31293">
    <property type="entry name" value="RNI-LIKE SUPERFAMILY PROTEIN"/>
    <property type="match status" value="1"/>
</dbReference>
<dbReference type="Pfam" id="PF00646">
    <property type="entry name" value="F-box"/>
    <property type="match status" value="1"/>
</dbReference>
<dbReference type="Pfam" id="PF24758">
    <property type="entry name" value="LRR_At5g56370"/>
    <property type="match status" value="1"/>
</dbReference>
<dbReference type="SMART" id="SM00579">
    <property type="entry name" value="FBD"/>
    <property type="match status" value="1"/>
</dbReference>
<dbReference type="SMART" id="SM00256">
    <property type="entry name" value="FBOX"/>
    <property type="match status" value="1"/>
</dbReference>
<dbReference type="SUPFAM" id="SSF81383">
    <property type="entry name" value="F-box domain"/>
    <property type="match status" value="1"/>
</dbReference>
<dbReference type="SUPFAM" id="SSF52058">
    <property type="entry name" value="L domain-like"/>
    <property type="match status" value="1"/>
</dbReference>
<dbReference type="PROSITE" id="PS50181">
    <property type="entry name" value="FBOX"/>
    <property type="match status" value="1"/>
</dbReference>
<reference key="1">
    <citation type="journal article" date="2000" name="Nature">
        <title>Sequence and analysis of chromosome 5 of the plant Arabidopsis thaliana.</title>
        <authorList>
            <person name="Tabata S."/>
            <person name="Kaneko T."/>
            <person name="Nakamura Y."/>
            <person name="Kotani H."/>
            <person name="Kato T."/>
            <person name="Asamizu E."/>
            <person name="Miyajima N."/>
            <person name="Sasamoto S."/>
            <person name="Kimura T."/>
            <person name="Hosouchi T."/>
            <person name="Kawashima K."/>
            <person name="Kohara M."/>
            <person name="Matsumoto M."/>
            <person name="Matsuno A."/>
            <person name="Muraki A."/>
            <person name="Nakayama S."/>
            <person name="Nakazaki N."/>
            <person name="Naruo K."/>
            <person name="Okumura S."/>
            <person name="Shinpo S."/>
            <person name="Takeuchi C."/>
            <person name="Wada T."/>
            <person name="Watanabe A."/>
            <person name="Yamada M."/>
            <person name="Yasuda M."/>
            <person name="Sato S."/>
            <person name="de la Bastide M."/>
            <person name="Huang E."/>
            <person name="Spiegel L."/>
            <person name="Gnoj L."/>
            <person name="O'Shaughnessy A."/>
            <person name="Preston R."/>
            <person name="Habermann K."/>
            <person name="Murray J."/>
            <person name="Johnson D."/>
            <person name="Rohlfing T."/>
            <person name="Nelson J."/>
            <person name="Stoneking T."/>
            <person name="Pepin K."/>
            <person name="Spieth J."/>
            <person name="Sekhon M."/>
            <person name="Armstrong J."/>
            <person name="Becker M."/>
            <person name="Belter E."/>
            <person name="Cordum H."/>
            <person name="Cordes M."/>
            <person name="Courtney L."/>
            <person name="Courtney W."/>
            <person name="Dante M."/>
            <person name="Du H."/>
            <person name="Edwards J."/>
            <person name="Fryman J."/>
            <person name="Haakensen B."/>
            <person name="Lamar E."/>
            <person name="Latreille P."/>
            <person name="Leonard S."/>
            <person name="Meyer R."/>
            <person name="Mulvaney E."/>
            <person name="Ozersky P."/>
            <person name="Riley A."/>
            <person name="Strowmatt C."/>
            <person name="Wagner-McPherson C."/>
            <person name="Wollam A."/>
            <person name="Yoakum M."/>
            <person name="Bell M."/>
            <person name="Dedhia N."/>
            <person name="Parnell L."/>
            <person name="Shah R."/>
            <person name="Rodriguez M."/>
            <person name="Hoon See L."/>
            <person name="Vil D."/>
            <person name="Baker J."/>
            <person name="Kirchoff K."/>
            <person name="Toth K."/>
            <person name="King L."/>
            <person name="Bahret A."/>
            <person name="Miller B."/>
            <person name="Marra M.A."/>
            <person name="Martienssen R."/>
            <person name="McCombie W.R."/>
            <person name="Wilson R.K."/>
            <person name="Murphy G."/>
            <person name="Bancroft I."/>
            <person name="Volckaert G."/>
            <person name="Wambutt R."/>
            <person name="Duesterhoeft A."/>
            <person name="Stiekema W."/>
            <person name="Pohl T."/>
            <person name="Entian K.-D."/>
            <person name="Terryn N."/>
            <person name="Hartley N."/>
            <person name="Bent E."/>
            <person name="Johnson S."/>
            <person name="Langham S.-A."/>
            <person name="McCullagh B."/>
            <person name="Robben J."/>
            <person name="Grymonprez B."/>
            <person name="Zimmermann W."/>
            <person name="Ramsperger U."/>
            <person name="Wedler H."/>
            <person name="Balke K."/>
            <person name="Wedler E."/>
            <person name="Peters S."/>
            <person name="van Staveren M."/>
            <person name="Dirkse W."/>
            <person name="Mooijman P."/>
            <person name="Klein Lankhorst R."/>
            <person name="Weitzenegger T."/>
            <person name="Bothe G."/>
            <person name="Rose M."/>
            <person name="Hauf J."/>
            <person name="Berneiser S."/>
            <person name="Hempel S."/>
            <person name="Feldpausch M."/>
            <person name="Lamberth S."/>
            <person name="Villarroel R."/>
            <person name="Gielen J."/>
            <person name="Ardiles W."/>
            <person name="Bents O."/>
            <person name="Lemcke K."/>
            <person name="Kolesov G."/>
            <person name="Mayer K.F.X."/>
            <person name="Rudd S."/>
            <person name="Schoof H."/>
            <person name="Schueller C."/>
            <person name="Zaccaria P."/>
            <person name="Mewes H.-W."/>
            <person name="Bevan M."/>
            <person name="Fransz P.F."/>
        </authorList>
    </citation>
    <scope>NUCLEOTIDE SEQUENCE [LARGE SCALE GENOMIC DNA]</scope>
    <source>
        <strain>cv. Columbia</strain>
    </source>
</reference>
<reference key="2">
    <citation type="journal article" date="2017" name="Plant J.">
        <title>Araport11: a complete reannotation of the Arabidopsis thaliana reference genome.</title>
        <authorList>
            <person name="Cheng C.Y."/>
            <person name="Krishnakumar V."/>
            <person name="Chan A.P."/>
            <person name="Thibaud-Nissen F."/>
            <person name="Schobel S."/>
            <person name="Town C.D."/>
        </authorList>
    </citation>
    <scope>GENOME REANNOTATION</scope>
    <source>
        <strain>cv. Columbia</strain>
    </source>
</reference>
<gene>
    <name type="ordered locus">At5g25860</name>
    <name type="ORF">F18A17.110</name>
</gene>
<proteinExistence type="predicted"/>
<protein>
    <recommendedName>
        <fullName>Putative F-box/LRR-repeat protein At5g25860</fullName>
    </recommendedName>
</protein>
<evidence type="ECO:0000255" key="1">
    <source>
        <dbReference type="PROSITE-ProRule" id="PRU00080"/>
    </source>
</evidence>
<organism>
    <name type="scientific">Arabidopsis thaliana</name>
    <name type="common">Mouse-ear cress</name>
    <dbReference type="NCBI Taxonomy" id="3702"/>
    <lineage>
        <taxon>Eukaryota</taxon>
        <taxon>Viridiplantae</taxon>
        <taxon>Streptophyta</taxon>
        <taxon>Embryophyta</taxon>
        <taxon>Tracheophyta</taxon>
        <taxon>Spermatophyta</taxon>
        <taxon>Magnoliopsida</taxon>
        <taxon>eudicotyledons</taxon>
        <taxon>Gunneridae</taxon>
        <taxon>Pentapetalae</taxon>
        <taxon>rosids</taxon>
        <taxon>malvids</taxon>
        <taxon>Brassicales</taxon>
        <taxon>Brassicaceae</taxon>
        <taxon>Camelineae</taxon>
        <taxon>Arabidopsis</taxon>
    </lineage>
</organism>
<sequence length="448" mass="51940">MDTRKVKSSSRDAVNCLPDEILAKILSYLPTKRAVSTSLISKRWRNLFALMIQLFESQHHLYLDDSDLVYPEEGKGEMKDVQESFGDFVDKTLTDCNTIKKLSILCPLKCCAHKDIDQWLHHAMERGVVDLDMRFKMGFTPTQNEWPCNVFTIKTLVKLTFRIEVGQNKMPYCPKGVLPVLKSLFLHAIWFACERLCHSMLPGCPILEELFLHDLRGYRYNDSPNFSISHKTLKRLTVHFNNSFELGRPMQFDTPSLLYLEYSGFAPCRYSRTSYLNSLVEVKLDVHIRHECNTHMHLSPIIDWIGNVKTLSLSPASVKMMYSRCVELHVFSNLVKLYFESNEKEGWEVLPRLLNKSPKLETLVLKGLHCASDHGVCVDRNEVKVLEIYGFSGCGREVRQVKCLLREMQFLQVMKVEIDAHDDNKKLRVINHLLDLPKRPSKFHIQFL</sequence>
<name>FBL83_ARATH</name>
<keyword id="KW-0433">Leucine-rich repeat</keyword>
<keyword id="KW-1185">Reference proteome</keyword>
<keyword id="KW-0677">Repeat</keyword>
<accession>Q3E7J7</accession>
<feature type="chain" id="PRO_0000281980" description="Putative F-box/LRR-repeat protein At5g25860">
    <location>
        <begin position="1"/>
        <end position="448"/>
    </location>
</feature>
<feature type="domain" description="F-box" evidence="1">
    <location>
        <begin position="11"/>
        <end position="58"/>
    </location>
</feature>
<feature type="repeat" description="LRR 1">
    <location>
        <begin position="82"/>
        <end position="106"/>
    </location>
</feature>
<feature type="repeat" description="LRR 2">
    <location>
        <begin position="185"/>
        <end position="214"/>
    </location>
</feature>
<feature type="repeat" description="LRR 3">
    <location>
        <begin position="215"/>
        <end position="240"/>
    </location>
</feature>
<feature type="repeat" description="LRR 4">
    <location>
        <begin position="310"/>
        <end position="341"/>
    </location>
</feature>
<feature type="repeat" description="LRR 5">
    <location>
        <begin position="342"/>
        <end position="367"/>
    </location>
</feature>